<name>CRR57_ARATH</name>
<proteinExistence type="evidence at transcript level"/>
<evidence type="ECO:0000255" key="1"/>
<evidence type="ECO:0000255" key="2">
    <source>
        <dbReference type="PROSITE-ProRule" id="PRU00806"/>
    </source>
</evidence>
<evidence type="ECO:0000305" key="3"/>
<gene>
    <name type="primary">CRRSP57</name>
    <name type="ordered locus">At5g41280</name>
    <name type="ORF">K1O13.8</name>
</gene>
<dbReference type="EMBL" id="AB019225">
    <property type="protein sequence ID" value="BAB11104.1"/>
    <property type="molecule type" value="Genomic_DNA"/>
</dbReference>
<dbReference type="EMBL" id="CP002688">
    <property type="protein sequence ID" value="AED94660.1"/>
    <property type="molecule type" value="Genomic_DNA"/>
</dbReference>
<dbReference type="EMBL" id="AY924845">
    <property type="protein sequence ID" value="AAX23920.1"/>
    <property type="molecule type" value="mRNA"/>
</dbReference>
<dbReference type="EMBL" id="DQ132735">
    <property type="protein sequence ID" value="AAZ52765.1"/>
    <property type="molecule type" value="mRNA"/>
</dbReference>
<dbReference type="RefSeq" id="NP_198944.1">
    <property type="nucleotide sequence ID" value="NM_123493.4"/>
</dbReference>
<dbReference type="SMR" id="Q9FHD5"/>
<dbReference type="FunCoup" id="Q9FHD5">
    <property type="interactions" value="1"/>
</dbReference>
<dbReference type="GlyCosmos" id="Q9FHD5">
    <property type="glycosylation" value="10 sites, No reported glycans"/>
</dbReference>
<dbReference type="GlyGen" id="Q9FHD5">
    <property type="glycosylation" value="10 sites"/>
</dbReference>
<dbReference type="PaxDb" id="3702-AT5G41280.1"/>
<dbReference type="ProteomicsDB" id="224499"/>
<dbReference type="EnsemblPlants" id="AT5G41280.1">
    <property type="protein sequence ID" value="AT5G41280.1"/>
    <property type="gene ID" value="AT5G41280"/>
</dbReference>
<dbReference type="GeneID" id="834129"/>
<dbReference type="Gramene" id="AT5G41280.1">
    <property type="protein sequence ID" value="AT5G41280.1"/>
    <property type="gene ID" value="AT5G41280"/>
</dbReference>
<dbReference type="KEGG" id="ath:AT5G41280"/>
<dbReference type="Araport" id="AT5G41280"/>
<dbReference type="TAIR" id="AT5G41280"/>
<dbReference type="eggNOG" id="ENOG502QWDY">
    <property type="taxonomic scope" value="Eukaryota"/>
</dbReference>
<dbReference type="HOGENOM" id="CLU_000288_35_0_1"/>
<dbReference type="InParanoid" id="Q9FHD5"/>
<dbReference type="OMA" id="IGNRCER"/>
<dbReference type="PhylomeDB" id="Q9FHD5"/>
<dbReference type="PRO" id="PR:Q9FHD5"/>
<dbReference type="Proteomes" id="UP000006548">
    <property type="component" value="Chromosome 5"/>
</dbReference>
<dbReference type="ExpressionAtlas" id="Q9FHD5">
    <property type="expression patterns" value="baseline and differential"/>
</dbReference>
<dbReference type="GO" id="GO:0016020">
    <property type="term" value="C:membrane"/>
    <property type="evidence" value="ECO:0007669"/>
    <property type="project" value="UniProtKB-SubCell"/>
</dbReference>
<dbReference type="CDD" id="cd23509">
    <property type="entry name" value="Gnk2-like"/>
    <property type="match status" value="2"/>
</dbReference>
<dbReference type="FunFam" id="3.30.430.20:FF:000030">
    <property type="entry name" value="Cysteine-rich repeat secretory protein 9"/>
    <property type="match status" value="1"/>
</dbReference>
<dbReference type="FunFam" id="3.30.430.20:FF:000003">
    <property type="entry name" value="Cysteine-rich RLK (RECEPTOR-like protein kinase) 10"/>
    <property type="match status" value="1"/>
</dbReference>
<dbReference type="Gene3D" id="3.30.430.20">
    <property type="entry name" value="Gnk2 domain, C-X8-C-X2-C motif"/>
    <property type="match status" value="2"/>
</dbReference>
<dbReference type="InterPro" id="IPR002902">
    <property type="entry name" value="GNK2"/>
</dbReference>
<dbReference type="InterPro" id="IPR038408">
    <property type="entry name" value="GNK2_sf"/>
</dbReference>
<dbReference type="PANTHER" id="PTHR32099">
    <property type="entry name" value="CYSTEINE-RICH REPEAT SECRETORY PROTEIN"/>
    <property type="match status" value="1"/>
</dbReference>
<dbReference type="PANTHER" id="PTHR32099:SF85">
    <property type="entry name" value="CYSTEINE-RICH REPEAT SECRETORY PROTEIN 57-RELATED"/>
    <property type="match status" value="1"/>
</dbReference>
<dbReference type="Pfam" id="PF01657">
    <property type="entry name" value="Stress-antifung"/>
    <property type="match status" value="2"/>
</dbReference>
<dbReference type="PROSITE" id="PS51473">
    <property type="entry name" value="GNK2"/>
    <property type="match status" value="2"/>
</dbReference>
<comment type="subcellular location">
    <subcellularLocation>
        <location evidence="1">Membrane</location>
        <topology evidence="1">Single-pass type I membrane protein</topology>
    </subcellularLocation>
</comment>
<comment type="similarity">
    <text evidence="3">Belongs to the cysteine-rich repeat secretory protein family.</text>
</comment>
<reference key="1">
    <citation type="journal article" date="2000" name="DNA Res.">
        <title>Structural analysis of Arabidopsis thaliana chromosome 5. X. Sequence features of the regions of 3,076,755 bp covered by sixty P1 and TAC clones.</title>
        <authorList>
            <person name="Sato S."/>
            <person name="Nakamura Y."/>
            <person name="Kaneko T."/>
            <person name="Katoh T."/>
            <person name="Asamizu E."/>
            <person name="Kotani H."/>
            <person name="Tabata S."/>
        </authorList>
    </citation>
    <scope>NUCLEOTIDE SEQUENCE [LARGE SCALE GENOMIC DNA]</scope>
    <source>
        <strain>cv. Columbia</strain>
    </source>
</reference>
<reference key="2">
    <citation type="journal article" date="2017" name="Plant J.">
        <title>Araport11: a complete reannotation of the Arabidopsis thaliana reference genome.</title>
        <authorList>
            <person name="Cheng C.Y."/>
            <person name="Krishnakumar V."/>
            <person name="Chan A.P."/>
            <person name="Thibaud-Nissen F."/>
            <person name="Schobel S."/>
            <person name="Town C.D."/>
        </authorList>
    </citation>
    <scope>GENOME REANNOTATION</scope>
    <source>
        <strain>cv. Columbia</strain>
    </source>
</reference>
<reference key="3">
    <citation type="submission" date="2005-02" db="EMBL/GenBank/DDBJ databases">
        <authorList>
            <person name="Underwood B.A."/>
            <person name="Xiao Y.-L."/>
            <person name="Moskal W.A. Jr."/>
            <person name="Monaghan E.L."/>
            <person name="Wang W."/>
            <person name="Redman J.C."/>
            <person name="Wu H.C."/>
            <person name="Utterback T."/>
            <person name="Town C.D."/>
        </authorList>
    </citation>
    <scope>NUCLEOTIDE SEQUENCE [LARGE SCALE MRNA]</scope>
    <source>
        <strain>cv. Columbia</strain>
    </source>
</reference>
<reference key="4">
    <citation type="submission" date="2005-07" db="EMBL/GenBank/DDBJ databases">
        <title>Reconstruction of cDNA sequences for hypothetical genes in Arabidopsis thaliana from 5' and 3' RACE products.</title>
        <authorList>
            <person name="Xiao Y.-L."/>
            <person name="Underwood B.A."/>
            <person name="Moskal W.A. Jr."/>
            <person name="Torian U."/>
            <person name="Redman J.C."/>
            <person name="Wu H.C."/>
            <person name="Utterback T."/>
            <person name="Town C.D."/>
        </authorList>
    </citation>
    <scope>NUCLEOTIDE SEQUENCE [LARGE SCALE MRNA]</scope>
    <source>
        <strain>cv. Columbia</strain>
    </source>
</reference>
<reference key="5">
    <citation type="journal article" date="2001" name="Plant Physiol.">
        <title>A superfamily of proteins with novel cysteine-rich repeats.</title>
        <authorList>
            <person name="Chen Z."/>
        </authorList>
    </citation>
    <scope>GENE FAMILY ORGANIZATION</scope>
    <scope>NOMENCLATURE</scope>
</reference>
<protein>
    <recommendedName>
        <fullName>Cysteine-rich repeat secretory protein 57</fullName>
    </recommendedName>
</protein>
<keyword id="KW-0325">Glycoprotein</keyword>
<keyword id="KW-0472">Membrane</keyword>
<keyword id="KW-1185">Reference proteome</keyword>
<keyword id="KW-0677">Repeat</keyword>
<keyword id="KW-0732">Signal</keyword>
<keyword id="KW-0812">Transmembrane</keyword>
<keyword id="KW-1133">Transmembrane helix</keyword>
<organism>
    <name type="scientific">Arabidopsis thaliana</name>
    <name type="common">Mouse-ear cress</name>
    <dbReference type="NCBI Taxonomy" id="3702"/>
    <lineage>
        <taxon>Eukaryota</taxon>
        <taxon>Viridiplantae</taxon>
        <taxon>Streptophyta</taxon>
        <taxon>Embryophyta</taxon>
        <taxon>Tracheophyta</taxon>
        <taxon>Spermatophyta</taxon>
        <taxon>Magnoliopsida</taxon>
        <taxon>eudicotyledons</taxon>
        <taxon>Gunneridae</taxon>
        <taxon>Pentapetalae</taxon>
        <taxon>rosids</taxon>
        <taxon>malvids</taxon>
        <taxon>Brassicales</taxon>
        <taxon>Brassicaceae</taxon>
        <taxon>Camelineae</taxon>
        <taxon>Arabidopsis</taxon>
    </lineage>
</organism>
<feature type="signal peptide" evidence="1">
    <location>
        <begin position="1"/>
        <end position="20"/>
    </location>
</feature>
<feature type="chain" id="PRO_0000022617" description="Cysteine-rich repeat secretory protein 57">
    <location>
        <begin position="21"/>
        <end position="286"/>
    </location>
</feature>
<feature type="topological domain" description="Extracellular" evidence="1">
    <location>
        <begin position="21"/>
        <end position="265"/>
    </location>
</feature>
<feature type="transmembrane region" description="Helical" evidence="1">
    <location>
        <begin position="266"/>
        <end position="284"/>
    </location>
</feature>
<feature type="topological domain" description="Cytoplasmic" evidence="1">
    <location>
        <begin position="285"/>
        <end position="286"/>
    </location>
</feature>
<feature type="domain" description="Gnk2-homologous 1" evidence="2">
    <location>
        <begin position="29"/>
        <end position="131"/>
    </location>
</feature>
<feature type="domain" description="Gnk2-homologous 2" evidence="2">
    <location>
        <begin position="137"/>
        <end position="247"/>
    </location>
</feature>
<feature type="glycosylation site" description="N-linked (GlcNAc...) asparagine" evidence="1">
    <location>
        <position position="35"/>
    </location>
</feature>
<feature type="glycosylation site" description="N-linked (GlcNAc...) asparagine" evidence="1">
    <location>
        <position position="40"/>
    </location>
</feature>
<feature type="glycosylation site" description="N-linked (GlcNAc...) asparagine" evidence="1">
    <location>
        <position position="44"/>
    </location>
</feature>
<feature type="glycosylation site" description="N-linked (GlcNAc...) asparagine" evidence="1">
    <location>
        <position position="60"/>
    </location>
</feature>
<feature type="glycosylation site" description="N-linked (GlcNAc...) asparagine" evidence="1">
    <location>
        <position position="69"/>
    </location>
</feature>
<feature type="glycosylation site" description="N-linked (GlcNAc...) asparagine" evidence="1">
    <location>
        <position position="90"/>
    </location>
</feature>
<feature type="glycosylation site" description="N-linked (GlcNAc...) asparagine" evidence="1">
    <location>
        <position position="100"/>
    </location>
</feature>
<feature type="glycosylation site" description="N-linked (GlcNAc...) asparagine" evidence="1">
    <location>
        <position position="108"/>
    </location>
</feature>
<feature type="glycosylation site" description="N-linked (GlcNAc...) asparagine" evidence="1">
    <location>
        <position position="209"/>
    </location>
</feature>
<feature type="glycosylation site" description="N-linked (GlcNAc...) asparagine" evidence="1">
    <location>
        <position position="246"/>
    </location>
</feature>
<sequence>METTKKLSVLLCLFFTMNQAISESDSDEHMATFCNDSSGNFTRNTTYNTNLNTLLSTLSNQSSFANYYNLTTGLGSDTVHGMFLCIGDVNRTTCNACVKNATIEIAKNCTNHREAIIYYFSCMVRYSDKFFLSTLETKPNTYWSSDDPIPKSYDKFGQRLSDKMGEVIIRSSLLSSSFTPYYLMDTTTFDNLYDLESVVQCSPHLDPKNCTTCLKLALQELTQCCGDQLWAFIFTPKCLVSFDTSNSSSLPPLPPPSRSGSFSIRGNNKILVGMILAVSVFAFLGL</sequence>
<accession>Q9FHD5</accession>
<accession>Q5BPI3</accession>